<proteinExistence type="inferred from homology"/>
<dbReference type="EC" id="2.7.7.6" evidence="1"/>
<dbReference type="EMBL" id="CP000241">
    <property type="protein sequence ID" value="ABF85305.1"/>
    <property type="molecule type" value="Genomic_DNA"/>
</dbReference>
<dbReference type="RefSeq" id="WP_000864493.1">
    <property type="nucleotide sequence ID" value="NC_008086.1"/>
</dbReference>
<dbReference type="BMRB" id="Q1CRW7"/>
<dbReference type="SMR" id="Q1CRW7"/>
<dbReference type="KEGG" id="hpa:HPAG1_1238"/>
<dbReference type="HOGENOM" id="CLU_053084_0_1_7"/>
<dbReference type="GO" id="GO:0005737">
    <property type="term" value="C:cytoplasm"/>
    <property type="evidence" value="ECO:0007669"/>
    <property type="project" value="UniProtKB-ARBA"/>
</dbReference>
<dbReference type="GO" id="GO:0000428">
    <property type="term" value="C:DNA-directed RNA polymerase complex"/>
    <property type="evidence" value="ECO:0007669"/>
    <property type="project" value="UniProtKB-KW"/>
</dbReference>
<dbReference type="GO" id="GO:0003677">
    <property type="term" value="F:DNA binding"/>
    <property type="evidence" value="ECO:0007669"/>
    <property type="project" value="UniProtKB-UniRule"/>
</dbReference>
<dbReference type="GO" id="GO:0003899">
    <property type="term" value="F:DNA-directed RNA polymerase activity"/>
    <property type="evidence" value="ECO:0007669"/>
    <property type="project" value="UniProtKB-UniRule"/>
</dbReference>
<dbReference type="GO" id="GO:0046983">
    <property type="term" value="F:protein dimerization activity"/>
    <property type="evidence" value="ECO:0007669"/>
    <property type="project" value="InterPro"/>
</dbReference>
<dbReference type="GO" id="GO:0006351">
    <property type="term" value="P:DNA-templated transcription"/>
    <property type="evidence" value="ECO:0007669"/>
    <property type="project" value="UniProtKB-UniRule"/>
</dbReference>
<dbReference type="CDD" id="cd06928">
    <property type="entry name" value="RNAP_alpha_NTD"/>
    <property type="match status" value="1"/>
</dbReference>
<dbReference type="FunFam" id="1.10.150.20:FF:000122">
    <property type="entry name" value="DNA-directed RNA polymerase subunit alpha"/>
    <property type="match status" value="1"/>
</dbReference>
<dbReference type="Gene3D" id="1.10.150.20">
    <property type="entry name" value="5' to 3' exonuclease, C-terminal subdomain"/>
    <property type="match status" value="1"/>
</dbReference>
<dbReference type="Gene3D" id="2.170.120.12">
    <property type="entry name" value="DNA-directed RNA polymerase, insert domain"/>
    <property type="match status" value="1"/>
</dbReference>
<dbReference type="Gene3D" id="3.30.1360.10">
    <property type="entry name" value="RNA polymerase, RBP11-like subunit"/>
    <property type="match status" value="1"/>
</dbReference>
<dbReference type="HAMAP" id="MF_00059">
    <property type="entry name" value="RNApol_bact_RpoA"/>
    <property type="match status" value="1"/>
</dbReference>
<dbReference type="InterPro" id="IPR011262">
    <property type="entry name" value="DNA-dir_RNA_pol_insert"/>
</dbReference>
<dbReference type="InterPro" id="IPR011263">
    <property type="entry name" value="DNA-dir_RNA_pol_RpoA/D/Rpb3"/>
</dbReference>
<dbReference type="InterPro" id="IPR011773">
    <property type="entry name" value="DNA-dir_RpoA"/>
</dbReference>
<dbReference type="InterPro" id="IPR036603">
    <property type="entry name" value="RBP11-like"/>
</dbReference>
<dbReference type="InterPro" id="IPR011260">
    <property type="entry name" value="RNAP_asu_C"/>
</dbReference>
<dbReference type="InterPro" id="IPR036643">
    <property type="entry name" value="RNApol_insert_sf"/>
</dbReference>
<dbReference type="NCBIfam" id="NF003517">
    <property type="entry name" value="PRK05182.2-3"/>
    <property type="match status" value="1"/>
</dbReference>
<dbReference type="NCBIfam" id="TIGR02027">
    <property type="entry name" value="rpoA"/>
    <property type="match status" value="1"/>
</dbReference>
<dbReference type="Pfam" id="PF01000">
    <property type="entry name" value="RNA_pol_A_bac"/>
    <property type="match status" value="1"/>
</dbReference>
<dbReference type="Pfam" id="PF03118">
    <property type="entry name" value="RNA_pol_A_CTD"/>
    <property type="match status" value="1"/>
</dbReference>
<dbReference type="Pfam" id="PF01193">
    <property type="entry name" value="RNA_pol_L"/>
    <property type="match status" value="1"/>
</dbReference>
<dbReference type="SMART" id="SM00662">
    <property type="entry name" value="RPOLD"/>
    <property type="match status" value="1"/>
</dbReference>
<dbReference type="SUPFAM" id="SSF47789">
    <property type="entry name" value="C-terminal domain of RNA polymerase alpha subunit"/>
    <property type="match status" value="1"/>
</dbReference>
<dbReference type="SUPFAM" id="SSF56553">
    <property type="entry name" value="Insert subdomain of RNA polymerase alpha subunit"/>
    <property type="match status" value="1"/>
</dbReference>
<dbReference type="SUPFAM" id="SSF55257">
    <property type="entry name" value="RBP11-like subunits of RNA polymerase"/>
    <property type="match status" value="1"/>
</dbReference>
<feature type="chain" id="PRO_0000264506" description="DNA-directed RNA polymerase subunit alpha">
    <location>
        <begin position="1"/>
        <end position="344"/>
    </location>
</feature>
<feature type="region of interest" description="Alpha N-terminal domain (alpha-NTD)" evidence="1">
    <location>
        <begin position="1"/>
        <end position="238"/>
    </location>
</feature>
<feature type="region of interest" description="Alpha C-terminal domain (alpha-CTD)" evidence="1">
    <location>
        <begin position="253"/>
        <end position="344"/>
    </location>
</feature>
<protein>
    <recommendedName>
        <fullName evidence="1">DNA-directed RNA polymerase subunit alpha</fullName>
        <shortName evidence="1">RNAP subunit alpha</shortName>
        <ecNumber evidence="1">2.7.7.6</ecNumber>
    </recommendedName>
    <alternativeName>
        <fullName evidence="1">RNA polymerase subunit alpha</fullName>
    </alternativeName>
    <alternativeName>
        <fullName evidence="1">Transcriptase subunit alpha</fullName>
    </alternativeName>
</protein>
<comment type="function">
    <text evidence="1">DNA-dependent RNA polymerase catalyzes the transcription of DNA into RNA using the four ribonucleoside triphosphates as substrates.</text>
</comment>
<comment type="catalytic activity">
    <reaction evidence="1">
        <text>RNA(n) + a ribonucleoside 5'-triphosphate = RNA(n+1) + diphosphate</text>
        <dbReference type="Rhea" id="RHEA:21248"/>
        <dbReference type="Rhea" id="RHEA-COMP:14527"/>
        <dbReference type="Rhea" id="RHEA-COMP:17342"/>
        <dbReference type="ChEBI" id="CHEBI:33019"/>
        <dbReference type="ChEBI" id="CHEBI:61557"/>
        <dbReference type="ChEBI" id="CHEBI:140395"/>
        <dbReference type="EC" id="2.7.7.6"/>
    </reaction>
</comment>
<comment type="subunit">
    <text evidence="1">Homodimer. The RNAP catalytic core consists of 2 alpha, 1 beta, 1 beta' and 1 omega subunit. When a sigma factor is associated with the core the holoenzyme is formed, which can initiate transcription.</text>
</comment>
<comment type="domain">
    <text evidence="1">The N-terminal domain is essential for RNAP assembly and basal transcription, whereas the C-terminal domain is involved in interaction with transcriptional regulators and with upstream promoter elements.</text>
</comment>
<comment type="similarity">
    <text evidence="1">Belongs to the RNA polymerase alpha chain family.</text>
</comment>
<accession>Q1CRW7</accession>
<gene>
    <name evidence="1" type="primary">rpoA</name>
    <name type="ordered locus">HPAG1_1238</name>
</gene>
<name>RPOA_HELPH</name>
<evidence type="ECO:0000255" key="1">
    <source>
        <dbReference type="HAMAP-Rule" id="MF_00059"/>
    </source>
</evidence>
<sequence length="344" mass="38485">MKVIKTAPLIPSEIKVLEKEGNRVKISLAPFEFGYAVTLAHPIRRLLLLSSVGYAPIGLKIEGVHHEFDSLRGVTEDVSLFIMNLKNIRFIAKALVGQDSSLENQSVVVDYSFKGSMELRARDLNSDHIEIVNPEMPLATINEDAQLNFSLIIYKGMGYVPSETTRELMPEGYMPLDGSFTPIKKVVYEIENVLVEGDPNYEKIIFDIETDGQIDPYKAFLSAVKVMSKQLGVFGERPIANTEYSGDYAQRDDAKDLSAKIESMNLSARCFNCLDKIGIKYVGELVLMSEEELKGVKNMGKKSYDEIAEKLNDLGYPVGTELSPEQRESLKKRLEKLEDKGGND</sequence>
<keyword id="KW-0240">DNA-directed RNA polymerase</keyword>
<keyword id="KW-0548">Nucleotidyltransferase</keyword>
<keyword id="KW-0804">Transcription</keyword>
<keyword id="KW-0808">Transferase</keyword>
<organism>
    <name type="scientific">Helicobacter pylori (strain HPAG1)</name>
    <dbReference type="NCBI Taxonomy" id="357544"/>
    <lineage>
        <taxon>Bacteria</taxon>
        <taxon>Pseudomonadati</taxon>
        <taxon>Campylobacterota</taxon>
        <taxon>Epsilonproteobacteria</taxon>
        <taxon>Campylobacterales</taxon>
        <taxon>Helicobacteraceae</taxon>
        <taxon>Helicobacter</taxon>
    </lineage>
</organism>
<reference key="1">
    <citation type="journal article" date="2006" name="Proc. Natl. Acad. Sci. U.S.A.">
        <title>The complete genome sequence of a chronic atrophic gastritis Helicobacter pylori strain: evolution during disease progression.</title>
        <authorList>
            <person name="Oh J.D."/>
            <person name="Kling-Baeckhed H."/>
            <person name="Giannakis M."/>
            <person name="Xu J."/>
            <person name="Fulton R.S."/>
            <person name="Fulton L.A."/>
            <person name="Cordum H.S."/>
            <person name="Wang C."/>
            <person name="Elliott G."/>
            <person name="Edwards J."/>
            <person name="Mardis E.R."/>
            <person name="Engstrand L.G."/>
            <person name="Gordon J.I."/>
        </authorList>
    </citation>
    <scope>NUCLEOTIDE SEQUENCE [LARGE SCALE GENOMIC DNA]</scope>
    <source>
        <strain>HPAG1</strain>
    </source>
</reference>